<gene>
    <name evidence="1" type="primary">lnt</name>
    <name type="ordered locus">CT1498</name>
</gene>
<dbReference type="EC" id="2.3.1.269" evidence="1"/>
<dbReference type="EMBL" id="AE006470">
    <property type="protein sequence ID" value="AAM72725.1"/>
    <property type="molecule type" value="Genomic_DNA"/>
</dbReference>
<dbReference type="RefSeq" id="NP_662383.1">
    <property type="nucleotide sequence ID" value="NC_002932.3"/>
</dbReference>
<dbReference type="RefSeq" id="WP_010933164.1">
    <property type="nucleotide sequence ID" value="NC_002932.3"/>
</dbReference>
<dbReference type="SMR" id="Q8KCC4"/>
<dbReference type="STRING" id="194439.CT1498"/>
<dbReference type="EnsemblBacteria" id="AAM72725">
    <property type="protein sequence ID" value="AAM72725"/>
    <property type="gene ID" value="CT1498"/>
</dbReference>
<dbReference type="KEGG" id="cte:CT1498"/>
<dbReference type="PATRIC" id="fig|194439.7.peg.1358"/>
<dbReference type="eggNOG" id="COG0815">
    <property type="taxonomic scope" value="Bacteria"/>
</dbReference>
<dbReference type="HOGENOM" id="CLU_019563_1_2_10"/>
<dbReference type="OrthoDB" id="9804277at2"/>
<dbReference type="UniPathway" id="UPA00666"/>
<dbReference type="Proteomes" id="UP000001007">
    <property type="component" value="Chromosome"/>
</dbReference>
<dbReference type="GO" id="GO:0005886">
    <property type="term" value="C:plasma membrane"/>
    <property type="evidence" value="ECO:0007669"/>
    <property type="project" value="UniProtKB-SubCell"/>
</dbReference>
<dbReference type="GO" id="GO:0016410">
    <property type="term" value="F:N-acyltransferase activity"/>
    <property type="evidence" value="ECO:0007669"/>
    <property type="project" value="UniProtKB-UniRule"/>
</dbReference>
<dbReference type="GO" id="GO:0042158">
    <property type="term" value="P:lipoprotein biosynthetic process"/>
    <property type="evidence" value="ECO:0007669"/>
    <property type="project" value="UniProtKB-UniRule"/>
</dbReference>
<dbReference type="CDD" id="cd07571">
    <property type="entry name" value="ALP_N-acyl_transferase"/>
    <property type="match status" value="1"/>
</dbReference>
<dbReference type="Gene3D" id="3.60.110.10">
    <property type="entry name" value="Carbon-nitrogen hydrolase"/>
    <property type="match status" value="1"/>
</dbReference>
<dbReference type="HAMAP" id="MF_01148">
    <property type="entry name" value="Lnt"/>
    <property type="match status" value="1"/>
</dbReference>
<dbReference type="InterPro" id="IPR004563">
    <property type="entry name" value="Apolipo_AcylTrfase"/>
</dbReference>
<dbReference type="InterPro" id="IPR003010">
    <property type="entry name" value="C-N_Hydrolase"/>
</dbReference>
<dbReference type="InterPro" id="IPR036526">
    <property type="entry name" value="C-N_Hydrolase_sf"/>
</dbReference>
<dbReference type="InterPro" id="IPR045378">
    <property type="entry name" value="LNT_N"/>
</dbReference>
<dbReference type="NCBIfam" id="TIGR00546">
    <property type="entry name" value="lnt"/>
    <property type="match status" value="1"/>
</dbReference>
<dbReference type="PANTHER" id="PTHR38686">
    <property type="entry name" value="APOLIPOPROTEIN N-ACYLTRANSFERASE"/>
    <property type="match status" value="1"/>
</dbReference>
<dbReference type="PANTHER" id="PTHR38686:SF1">
    <property type="entry name" value="APOLIPOPROTEIN N-ACYLTRANSFERASE"/>
    <property type="match status" value="1"/>
</dbReference>
<dbReference type="Pfam" id="PF00795">
    <property type="entry name" value="CN_hydrolase"/>
    <property type="match status" value="1"/>
</dbReference>
<dbReference type="Pfam" id="PF20154">
    <property type="entry name" value="LNT_N"/>
    <property type="match status" value="1"/>
</dbReference>
<dbReference type="SUPFAM" id="SSF56317">
    <property type="entry name" value="Carbon-nitrogen hydrolase"/>
    <property type="match status" value="1"/>
</dbReference>
<dbReference type="PROSITE" id="PS50263">
    <property type="entry name" value="CN_HYDROLASE"/>
    <property type="match status" value="1"/>
</dbReference>
<evidence type="ECO:0000255" key="1">
    <source>
        <dbReference type="HAMAP-Rule" id="MF_01148"/>
    </source>
</evidence>
<accession>Q8KCC4</accession>
<keyword id="KW-0012">Acyltransferase</keyword>
<keyword id="KW-0997">Cell inner membrane</keyword>
<keyword id="KW-1003">Cell membrane</keyword>
<keyword id="KW-0472">Membrane</keyword>
<keyword id="KW-1185">Reference proteome</keyword>
<keyword id="KW-0808">Transferase</keyword>
<keyword id="KW-0812">Transmembrane</keyword>
<keyword id="KW-1133">Transmembrane helix</keyword>
<name>LNT_CHLTE</name>
<feature type="chain" id="PRO_0000178058" description="Apolipoprotein N-acyltransferase">
    <location>
        <begin position="1"/>
        <end position="533"/>
    </location>
</feature>
<feature type="transmembrane region" description="Helical" evidence="1">
    <location>
        <begin position="17"/>
        <end position="37"/>
    </location>
</feature>
<feature type="transmembrane region" description="Helical" evidence="1">
    <location>
        <begin position="72"/>
        <end position="92"/>
    </location>
</feature>
<feature type="transmembrane region" description="Helical" evidence="1">
    <location>
        <begin position="116"/>
        <end position="136"/>
    </location>
</feature>
<feature type="transmembrane region" description="Helical" evidence="1">
    <location>
        <begin position="165"/>
        <end position="185"/>
    </location>
</feature>
<feature type="transmembrane region" description="Helical" evidence="1">
    <location>
        <begin position="190"/>
        <end position="210"/>
    </location>
</feature>
<feature type="transmembrane region" description="Helical" evidence="1">
    <location>
        <begin position="510"/>
        <end position="530"/>
    </location>
</feature>
<feature type="domain" description="CN hydrolase" evidence="1">
    <location>
        <begin position="232"/>
        <end position="499"/>
    </location>
</feature>
<feature type="active site" description="Proton acceptor" evidence="1">
    <location>
        <position position="274"/>
    </location>
</feature>
<feature type="active site" evidence="1">
    <location>
        <position position="352"/>
    </location>
</feature>
<feature type="active site" description="Nucleophile" evidence="1">
    <location>
        <position position="410"/>
    </location>
</feature>
<proteinExistence type="inferred from homology"/>
<comment type="function">
    <text evidence="1">Catalyzes the phospholipid dependent N-acylation of the N-terminal cysteine of apolipoprotein, the last step in lipoprotein maturation.</text>
</comment>
<comment type="catalytic activity">
    <reaction evidence="1">
        <text>N-terminal S-1,2-diacyl-sn-glyceryl-L-cysteinyl-[lipoprotein] + a glycerophospholipid = N-acyl-S-1,2-diacyl-sn-glyceryl-L-cysteinyl-[lipoprotein] + a 2-acyl-sn-glycero-3-phospholipid + H(+)</text>
        <dbReference type="Rhea" id="RHEA:48228"/>
        <dbReference type="Rhea" id="RHEA-COMP:14681"/>
        <dbReference type="Rhea" id="RHEA-COMP:14684"/>
        <dbReference type="ChEBI" id="CHEBI:15378"/>
        <dbReference type="ChEBI" id="CHEBI:136912"/>
        <dbReference type="ChEBI" id="CHEBI:140656"/>
        <dbReference type="ChEBI" id="CHEBI:140657"/>
        <dbReference type="ChEBI" id="CHEBI:140660"/>
        <dbReference type="EC" id="2.3.1.269"/>
    </reaction>
</comment>
<comment type="pathway">
    <text evidence="1">Protein modification; lipoprotein biosynthesis (N-acyl transfer).</text>
</comment>
<comment type="subcellular location">
    <subcellularLocation>
        <location evidence="1">Cell inner membrane</location>
        <topology evidence="1">Multi-pass membrane protein</topology>
    </subcellularLocation>
</comment>
<comment type="similarity">
    <text evidence="1">Belongs to the CN hydrolase family. Apolipoprotein N-acyltransferase subfamily.</text>
</comment>
<reference key="1">
    <citation type="journal article" date="2002" name="Proc. Natl. Acad. Sci. U.S.A.">
        <title>The complete genome sequence of Chlorobium tepidum TLS, a photosynthetic, anaerobic, green-sulfur bacterium.</title>
        <authorList>
            <person name="Eisen J.A."/>
            <person name="Nelson K.E."/>
            <person name="Paulsen I.T."/>
            <person name="Heidelberg J.F."/>
            <person name="Wu M."/>
            <person name="Dodson R.J."/>
            <person name="DeBoy R.T."/>
            <person name="Gwinn M.L."/>
            <person name="Nelson W.C."/>
            <person name="Haft D.H."/>
            <person name="Hickey E.K."/>
            <person name="Peterson J.D."/>
            <person name="Durkin A.S."/>
            <person name="Kolonay J.F."/>
            <person name="Yang F."/>
            <person name="Holt I.E."/>
            <person name="Umayam L.A."/>
            <person name="Mason T.M."/>
            <person name="Brenner M."/>
            <person name="Shea T.P."/>
            <person name="Parksey D.S."/>
            <person name="Nierman W.C."/>
            <person name="Feldblyum T.V."/>
            <person name="Hansen C.L."/>
            <person name="Craven M.B."/>
            <person name="Radune D."/>
            <person name="Vamathevan J.J."/>
            <person name="Khouri H.M."/>
            <person name="White O."/>
            <person name="Gruber T.M."/>
            <person name="Ketchum K.A."/>
            <person name="Venter J.C."/>
            <person name="Tettelin H."/>
            <person name="Bryant D.A."/>
            <person name="Fraser C.M."/>
        </authorList>
    </citation>
    <scope>NUCLEOTIDE SEQUENCE [LARGE SCALE GENOMIC DNA]</scope>
    <source>
        <strain>ATCC 49652 / DSM 12025 / NBRC 103806 / TLS</strain>
    </source>
</reference>
<organism>
    <name type="scientific">Chlorobaculum tepidum (strain ATCC 49652 / DSM 12025 / NBRC 103806 / TLS)</name>
    <name type="common">Chlorobium tepidum</name>
    <dbReference type="NCBI Taxonomy" id="194439"/>
    <lineage>
        <taxon>Bacteria</taxon>
        <taxon>Pseudomonadati</taxon>
        <taxon>Chlorobiota</taxon>
        <taxon>Chlorobiia</taxon>
        <taxon>Chlorobiales</taxon>
        <taxon>Chlorobiaceae</taxon>
        <taxon>Chlorobaculum</taxon>
    </lineage>
</organism>
<protein>
    <recommendedName>
        <fullName evidence="1">Apolipoprotein N-acyltransferase</fullName>
        <shortName evidence="1">ALP N-acyltransferase</shortName>
        <ecNumber evidence="1">2.3.1.269</ecNumber>
    </recommendedName>
</protein>
<sequence>MNGAYRGALSRLLSKPFFLPLLSGLLLGISFPTWPAVHLEPLAWIALVPLLLSLEHEERFGPFFRKSWMSMLLFCLIALWWVCLATFVGGILTVFVQSLFSVVPLVVFYYFKKRAGFRSALLALPFIWTGWEWAYMQQDFSLGWLTFGNSQANLLWMVQYADVTGVWGVSFWLLTFNVLVLLLFMEKESFQVKVGIVMVMLVMIATPLLYARQVFRNTALDNTSPKVRVALVQPDIDPHEKWDGLGPEETLSRLYSLTGQSVRGERLELIIWPETAIPFYIRLPENKPYMDSVRRMVMRWNTPLLTGFPDEVPVFPNSARGEAVAASGAEYAAYNASMLLHPAGGPVQIYRKMRLVPFGERVPYSEYFPWLERLSFSMSGISSWAKGREATVMHFTSRDGQPVRMANIICYESIFPGQVSTFVRRGAQFLTLVTNDGWYGTSYGPWQHAAIDRLRCIENRRAMARCANTGVTLFYDICGRSYAETPWWQQSVLTADVPLESRITFYTAHPDLVPHVCLGIAGVLALVAAVRKR</sequence>